<organism>
    <name type="scientific">Brucella suis biovar 1 (strain 1330)</name>
    <dbReference type="NCBI Taxonomy" id="204722"/>
    <lineage>
        <taxon>Bacteria</taxon>
        <taxon>Pseudomonadati</taxon>
        <taxon>Pseudomonadota</taxon>
        <taxon>Alphaproteobacteria</taxon>
        <taxon>Hyphomicrobiales</taxon>
        <taxon>Brucellaceae</taxon>
        <taxon>Brucella/Ochrobactrum group</taxon>
        <taxon>Brucella</taxon>
    </lineage>
</organism>
<reference key="1">
    <citation type="journal article" date="2002" name="Proc. Natl. Acad. Sci. U.S.A.">
        <title>The Brucella suis genome reveals fundamental similarities between animal and plant pathogens and symbionts.</title>
        <authorList>
            <person name="Paulsen I.T."/>
            <person name="Seshadri R."/>
            <person name="Nelson K.E."/>
            <person name="Eisen J.A."/>
            <person name="Heidelberg J.F."/>
            <person name="Read T.D."/>
            <person name="Dodson R.J."/>
            <person name="Umayam L.A."/>
            <person name="Brinkac L.M."/>
            <person name="Beanan M.J."/>
            <person name="Daugherty S.C."/>
            <person name="DeBoy R.T."/>
            <person name="Durkin A.S."/>
            <person name="Kolonay J.F."/>
            <person name="Madupu R."/>
            <person name="Nelson W.C."/>
            <person name="Ayodeji B."/>
            <person name="Kraul M."/>
            <person name="Shetty J."/>
            <person name="Malek J.A."/>
            <person name="Van Aken S.E."/>
            <person name="Riedmuller S."/>
            <person name="Tettelin H."/>
            <person name="Gill S.R."/>
            <person name="White O."/>
            <person name="Salzberg S.L."/>
            <person name="Hoover D.L."/>
            <person name="Lindler L.E."/>
            <person name="Halling S.M."/>
            <person name="Boyle S.M."/>
            <person name="Fraser C.M."/>
        </authorList>
    </citation>
    <scope>NUCLEOTIDE SEQUENCE [LARGE SCALE GENOMIC DNA]</scope>
    <source>
        <strain>1330</strain>
    </source>
</reference>
<reference key="2">
    <citation type="journal article" date="2011" name="J. Bacteriol.">
        <title>Revised genome sequence of Brucella suis 1330.</title>
        <authorList>
            <person name="Tae H."/>
            <person name="Shallom S."/>
            <person name="Settlage R."/>
            <person name="Preston D."/>
            <person name="Adams L.G."/>
            <person name="Garner H.R."/>
        </authorList>
    </citation>
    <scope>NUCLEOTIDE SEQUENCE [LARGE SCALE GENOMIC DNA]</scope>
    <source>
        <strain>1330</strain>
    </source>
</reference>
<feature type="chain" id="PRO_0000131230" description="Large ribosomal subunit protein uL18">
    <location>
        <begin position="1"/>
        <end position="120"/>
    </location>
</feature>
<comment type="function">
    <text evidence="1">This is one of the proteins that bind and probably mediate the attachment of the 5S RNA into the large ribosomal subunit, where it forms part of the central protuberance.</text>
</comment>
<comment type="subunit">
    <text evidence="1">Part of the 50S ribosomal subunit; part of the 5S rRNA/L5/L18/L25 subcomplex. Contacts the 5S and 23S rRNAs.</text>
</comment>
<comment type="similarity">
    <text evidence="1">Belongs to the universal ribosomal protein uL18 family.</text>
</comment>
<name>RL18_BRUSU</name>
<dbReference type="EMBL" id="AE014291">
    <property type="protein sequence ID" value="AAN30136.1"/>
    <property type="molecule type" value="Genomic_DNA"/>
</dbReference>
<dbReference type="EMBL" id="CP002997">
    <property type="protein sequence ID" value="AEM18554.1"/>
    <property type="molecule type" value="Genomic_DNA"/>
</dbReference>
<dbReference type="RefSeq" id="WP_006278479.1">
    <property type="nucleotide sequence ID" value="NC_004310.3"/>
</dbReference>
<dbReference type="SMR" id="Q8G088"/>
<dbReference type="GeneID" id="45052252"/>
<dbReference type="KEGG" id="bms:BR1217"/>
<dbReference type="KEGG" id="bsi:BS1330_I1213"/>
<dbReference type="PATRIC" id="fig|204722.21.peg.2259"/>
<dbReference type="HOGENOM" id="CLU_098841_0_1_5"/>
<dbReference type="PhylomeDB" id="Q8G088"/>
<dbReference type="Proteomes" id="UP000007104">
    <property type="component" value="Chromosome I"/>
</dbReference>
<dbReference type="GO" id="GO:0022625">
    <property type="term" value="C:cytosolic large ribosomal subunit"/>
    <property type="evidence" value="ECO:0007669"/>
    <property type="project" value="TreeGrafter"/>
</dbReference>
<dbReference type="GO" id="GO:0008097">
    <property type="term" value="F:5S rRNA binding"/>
    <property type="evidence" value="ECO:0007669"/>
    <property type="project" value="TreeGrafter"/>
</dbReference>
<dbReference type="GO" id="GO:0003735">
    <property type="term" value="F:structural constituent of ribosome"/>
    <property type="evidence" value="ECO:0007669"/>
    <property type="project" value="InterPro"/>
</dbReference>
<dbReference type="GO" id="GO:0006412">
    <property type="term" value="P:translation"/>
    <property type="evidence" value="ECO:0007669"/>
    <property type="project" value="UniProtKB-UniRule"/>
</dbReference>
<dbReference type="CDD" id="cd00432">
    <property type="entry name" value="Ribosomal_L18_L5e"/>
    <property type="match status" value="1"/>
</dbReference>
<dbReference type="FunFam" id="3.30.420.100:FF:000001">
    <property type="entry name" value="50S ribosomal protein L18"/>
    <property type="match status" value="1"/>
</dbReference>
<dbReference type="Gene3D" id="3.30.420.100">
    <property type="match status" value="1"/>
</dbReference>
<dbReference type="HAMAP" id="MF_01337_B">
    <property type="entry name" value="Ribosomal_uL18_B"/>
    <property type="match status" value="1"/>
</dbReference>
<dbReference type="InterPro" id="IPR004389">
    <property type="entry name" value="Ribosomal_uL18_bac-type"/>
</dbReference>
<dbReference type="InterPro" id="IPR005484">
    <property type="entry name" value="Ribosomal_uL18_bac/euk"/>
</dbReference>
<dbReference type="NCBIfam" id="TIGR00060">
    <property type="entry name" value="L18_bact"/>
    <property type="match status" value="1"/>
</dbReference>
<dbReference type="PANTHER" id="PTHR12899">
    <property type="entry name" value="39S RIBOSOMAL PROTEIN L18, MITOCHONDRIAL"/>
    <property type="match status" value="1"/>
</dbReference>
<dbReference type="PANTHER" id="PTHR12899:SF3">
    <property type="entry name" value="LARGE RIBOSOMAL SUBUNIT PROTEIN UL18M"/>
    <property type="match status" value="1"/>
</dbReference>
<dbReference type="Pfam" id="PF00861">
    <property type="entry name" value="Ribosomal_L18p"/>
    <property type="match status" value="1"/>
</dbReference>
<dbReference type="SUPFAM" id="SSF53137">
    <property type="entry name" value="Translational machinery components"/>
    <property type="match status" value="1"/>
</dbReference>
<evidence type="ECO:0000255" key="1">
    <source>
        <dbReference type="HAMAP-Rule" id="MF_01337"/>
    </source>
</evidence>
<evidence type="ECO:0000305" key="2"/>
<accession>Q8G088</accession>
<accession>G0KAD8</accession>
<keyword id="KW-0687">Ribonucleoprotein</keyword>
<keyword id="KW-0689">Ribosomal protein</keyword>
<keyword id="KW-0694">RNA-binding</keyword>
<keyword id="KW-0699">rRNA-binding</keyword>
<proteinExistence type="inferred from homology"/>
<gene>
    <name evidence="1" type="primary">rplR</name>
    <name type="ordered locus">BR1217</name>
    <name type="ordered locus">BS1330_I1213</name>
</gene>
<protein>
    <recommendedName>
        <fullName evidence="1">Large ribosomal subunit protein uL18</fullName>
    </recommendedName>
    <alternativeName>
        <fullName evidence="2">50S ribosomal protein L18</fullName>
    </alternativeName>
</protein>
<sequence>MASPKETLQRRAARVRRQVKAVANGRPRLSVHRSSKNIYAQIIDDVRGVTLAAASTLDGDLKGKLKTGADSAAAAAVGKLVAERAVKAGVKDVVFDRSAFIYHGRVKALAEAAREGGLSF</sequence>